<organism>
    <name type="scientific">Myocastor coypus</name>
    <name type="common">Coypu</name>
    <name type="synonym">Mus coypus</name>
    <dbReference type="NCBI Taxonomy" id="10157"/>
    <lineage>
        <taxon>Eukaryota</taxon>
        <taxon>Metazoa</taxon>
        <taxon>Chordata</taxon>
        <taxon>Craniata</taxon>
        <taxon>Vertebrata</taxon>
        <taxon>Euteleostomi</taxon>
        <taxon>Mammalia</taxon>
        <taxon>Eutheria</taxon>
        <taxon>Euarchontoglires</taxon>
        <taxon>Glires</taxon>
        <taxon>Rodentia</taxon>
        <taxon>Hystricomorpha</taxon>
        <taxon>Myocastoridae</taxon>
        <taxon>Myocastor</taxon>
    </lineage>
</organism>
<dbReference type="EMBL" id="X82998">
    <property type="protein sequence ID" value="CAA58119.1"/>
    <property type="molecule type" value="mRNA"/>
</dbReference>
<dbReference type="PIR" id="I48204">
    <property type="entry name" value="I48204"/>
</dbReference>
<dbReference type="SMR" id="P42889"/>
<dbReference type="GO" id="GO:0005576">
    <property type="term" value="C:extracellular region"/>
    <property type="evidence" value="ECO:0007669"/>
    <property type="project" value="UniProtKB-SubCell"/>
</dbReference>
<dbReference type="GO" id="GO:0008047">
    <property type="term" value="F:enzyme activator activity"/>
    <property type="evidence" value="ECO:0007669"/>
    <property type="project" value="InterPro"/>
</dbReference>
<dbReference type="GO" id="GO:0035473">
    <property type="term" value="F:lipase binding"/>
    <property type="evidence" value="ECO:0007669"/>
    <property type="project" value="InterPro"/>
</dbReference>
<dbReference type="GO" id="GO:0007586">
    <property type="term" value="P:digestion"/>
    <property type="evidence" value="ECO:0007669"/>
    <property type="project" value="UniProtKB-KW"/>
</dbReference>
<dbReference type="GO" id="GO:0016042">
    <property type="term" value="P:lipid catabolic process"/>
    <property type="evidence" value="ECO:0007669"/>
    <property type="project" value="UniProtKB-KW"/>
</dbReference>
<dbReference type="GO" id="GO:0032094">
    <property type="term" value="P:response to food"/>
    <property type="evidence" value="ECO:0007669"/>
    <property type="project" value="TreeGrafter"/>
</dbReference>
<dbReference type="CDD" id="cd23011">
    <property type="entry name" value="CLPS"/>
    <property type="match status" value="1"/>
</dbReference>
<dbReference type="FunFam" id="2.10.80.10:FF:000005">
    <property type="entry name" value="Colipase"/>
    <property type="match status" value="1"/>
</dbReference>
<dbReference type="Gene3D" id="2.10.80.10">
    <property type="entry name" value="Lipase, subunit A"/>
    <property type="match status" value="1"/>
</dbReference>
<dbReference type="InterPro" id="IPR047576">
    <property type="entry name" value="CLPS_chr"/>
</dbReference>
<dbReference type="InterPro" id="IPR001981">
    <property type="entry name" value="Colipase"/>
</dbReference>
<dbReference type="InterPro" id="IPR017914">
    <property type="entry name" value="Colipase_C"/>
</dbReference>
<dbReference type="InterPro" id="IPR017915">
    <property type="entry name" value="Colipase_CS"/>
</dbReference>
<dbReference type="InterPro" id="IPR017913">
    <property type="entry name" value="Colipase_N"/>
</dbReference>
<dbReference type="PANTHER" id="PTHR10041">
    <property type="entry name" value="COLIPASE"/>
    <property type="match status" value="1"/>
</dbReference>
<dbReference type="PANTHER" id="PTHR10041:SF8">
    <property type="entry name" value="COLIPASE"/>
    <property type="match status" value="1"/>
</dbReference>
<dbReference type="Pfam" id="PF01114">
    <property type="entry name" value="Colipase"/>
    <property type="match status" value="1"/>
</dbReference>
<dbReference type="Pfam" id="PF02740">
    <property type="entry name" value="Colipase_C"/>
    <property type="match status" value="1"/>
</dbReference>
<dbReference type="PRINTS" id="PR00128">
    <property type="entry name" value="COLIPASE"/>
</dbReference>
<dbReference type="SMART" id="SM00023">
    <property type="entry name" value="COLIPASE"/>
    <property type="match status" value="1"/>
</dbReference>
<dbReference type="SUPFAM" id="SSF57190">
    <property type="entry name" value="Colipase-like"/>
    <property type="match status" value="2"/>
</dbReference>
<dbReference type="PROSITE" id="PS00121">
    <property type="entry name" value="COLIPASE_1"/>
    <property type="match status" value="1"/>
</dbReference>
<dbReference type="PROSITE" id="PS51342">
    <property type="entry name" value="COLIPASE_2"/>
    <property type="match status" value="1"/>
</dbReference>
<keyword id="KW-0222">Digestion</keyword>
<keyword id="KW-0903">Direct protein sequencing</keyword>
<keyword id="KW-1015">Disulfide bond</keyword>
<keyword id="KW-0442">Lipid degradation</keyword>
<keyword id="KW-0443">Lipid metabolism</keyword>
<keyword id="KW-0964">Secreted</keyword>
<keyword id="KW-0732">Signal</keyword>
<evidence type="ECO:0000250" key="1">
    <source>
        <dbReference type="UniProtKB" id="P04118"/>
    </source>
</evidence>
<evidence type="ECO:0000255" key="2"/>
<evidence type="ECO:0000255" key="3">
    <source>
        <dbReference type="PROSITE-ProRule" id="PRU00674"/>
    </source>
</evidence>
<evidence type="ECO:0000269" key="4">
    <source>
    </source>
</evidence>
<comment type="function">
    <text evidence="1">Colipase is a cofactor of pancreatic lipase. It allows the lipase to anchor itself to the lipid-water interface. Without colipase the enzyme is washed off by bile salts, which have an inhibitory effect on the lipase.</text>
</comment>
<comment type="function">
    <text evidence="1">Enterostatin has a biological activity as a satiety signal.</text>
</comment>
<comment type="subunit">
    <text evidence="3">Forms a 1:1 stoichiometric complex with pancreatic lipase.</text>
</comment>
<comment type="subcellular location">
    <subcellularLocation>
        <location>Secreted</location>
    </subcellularLocation>
</comment>
<comment type="tissue specificity">
    <text>Expressed by the pancreas.</text>
</comment>
<comment type="similarity">
    <text evidence="3">Belongs to the colipase family.</text>
</comment>
<sequence length="111" mass="11899">MEKVLALVLLTLAVAYAAPDPRGLIINLDNGELCLNSAQCKSQCCQHDSPLGLARCADKARENSGCSPQTIYGIYYLCPCERGLTCDGDKSIIGAITNTNYGICQDPQSKK</sequence>
<accession>P42889</accession>
<gene>
    <name type="primary">CLPS</name>
</gene>
<proteinExistence type="evidence at protein level"/>
<feature type="signal peptide" evidence="4">
    <location>
        <begin position="1"/>
        <end position="17"/>
    </location>
</feature>
<feature type="propeptide" id="PRO_0000005700" description="Enterostatin, activation peptide" evidence="2">
    <location>
        <begin position="18"/>
        <end position="22"/>
    </location>
</feature>
<feature type="chain" id="PRO_0000005701" description="Colipase">
    <location>
        <begin position="23"/>
        <end position="111"/>
    </location>
</feature>
<feature type="disulfide bond" evidence="3">
    <location>
        <begin position="34"/>
        <end position="45"/>
    </location>
</feature>
<feature type="disulfide bond" evidence="3">
    <location>
        <begin position="40"/>
        <end position="56"/>
    </location>
</feature>
<feature type="disulfide bond" evidence="3">
    <location>
        <begin position="44"/>
        <end position="78"/>
    </location>
</feature>
<feature type="disulfide bond" evidence="3">
    <location>
        <begin position="66"/>
        <end position="86"/>
    </location>
</feature>
<feature type="disulfide bond" evidence="3">
    <location>
        <begin position="80"/>
        <end position="104"/>
    </location>
</feature>
<reference key="1">
    <citation type="journal article" date="1995" name="Eur. J. Biochem.">
        <title>Cloning and expression in insect cells of two pancreatic lipases and a procolipase from Myocastor coypus.</title>
        <authorList>
            <person name="Thirstrup K."/>
            <person name="Carriere F."/>
            <person name="Hjorth S.A."/>
            <person name="Rasmussen P.B."/>
            <person name="Nielsen P.F."/>
            <person name="Ladefoged C."/>
            <person name="Thim L."/>
            <person name="Boel E."/>
        </authorList>
    </citation>
    <scope>NUCLEOTIDE SEQUENCE [MRNA]</scope>
    <scope>PROTEIN SEQUENCE OF 18-41</scope>
    <source>
        <tissue>Pancreas</tissue>
    </source>
</reference>
<name>COL_MYOCO</name>
<protein>
    <recommendedName>
        <fullName>Colipase</fullName>
    </recommendedName>
</protein>